<comment type="function">
    <text evidence="6">Activation of RuBisCO (ribulose-1,5-bisphosphate carboxylase/oxygenase; EC 4.1.1.39) involves the ATP-dependent carboxylation of the epsilon-amino group of lysine leading to a carbamate structure.</text>
</comment>
<comment type="subcellular location">
    <subcellularLocation>
        <location>Plastid</location>
        <location>Chloroplast stroma</location>
    </subcellularLocation>
</comment>
<comment type="similarity">
    <text evidence="1">Belongs to the RuBisCO activase family.</text>
</comment>
<reference evidence="6" key="1">
    <citation type="journal article" date="2006" name="Ann. Bot.">
        <title>Proteome profiling of Populus euphratica Oliv. upon heat stress.</title>
        <authorList>
            <person name="Ferreira S."/>
            <person name="Hjernoe K."/>
            <person name="Larsen M."/>
            <person name="Wingsle G."/>
            <person name="Larsen P."/>
            <person name="Fey S."/>
            <person name="Roepstorff P."/>
            <person name="Pais M.S."/>
        </authorList>
    </citation>
    <scope>PROTEIN SEQUENCE</scope>
    <source>
        <tissue evidence="3">Leaf</tissue>
    </source>
</reference>
<reference evidence="6" key="2">
    <citation type="thesis" date="2006" institute="ICAT-FCUL" country="Portugal">
        <title>Molecular analysis of Populus euphratica Oliv. response to moderate heat stress.</title>
        <authorList>
            <person name="Ferreira S."/>
        </authorList>
    </citation>
    <scope>PROTEIN SEQUENCE</scope>
    <source>
        <tissue evidence="4">Leaf</tissue>
    </source>
</reference>
<sequence length="32" mass="3540">LVDTFPGQSIDFFGALREGPPTFEQPAMTIEK</sequence>
<feature type="chain" id="PRO_0000216426" description="Ribulose bisphosphate carboxylase/oxygenase activase, chloroplastic">
    <location>
        <begin position="1" status="less than"/>
        <end position="32" status="greater than"/>
    </location>
</feature>
<feature type="region of interest" description="Disordered" evidence="2">
    <location>
        <begin position="13"/>
        <end position="32"/>
    </location>
</feature>
<feature type="sequence conflict" description="In Ref. 2; AA sequence." evidence="6" ref="2">
    <original>L</original>
    <variation>I</variation>
    <location>
        <position position="1"/>
    </location>
</feature>
<feature type="non-consecutive residues" evidence="5">
    <location>
        <begin position="17"/>
        <end position="18"/>
    </location>
</feature>
<feature type="non-terminal residue" evidence="5">
    <location>
        <position position="1"/>
    </location>
</feature>
<feature type="non-terminal residue" evidence="5">
    <location>
        <position position="32"/>
    </location>
</feature>
<proteinExistence type="evidence at protein level"/>
<accession>P84562</accession>
<evidence type="ECO:0000255" key="1"/>
<evidence type="ECO:0000256" key="2">
    <source>
        <dbReference type="SAM" id="MobiDB-lite"/>
    </source>
</evidence>
<evidence type="ECO:0000269" key="3">
    <source>
    </source>
</evidence>
<evidence type="ECO:0000269" key="4">
    <source ref="2"/>
</evidence>
<evidence type="ECO:0000303" key="5">
    <source>
    </source>
</evidence>
<evidence type="ECO:0000305" key="6"/>
<organism>
    <name type="scientific">Populus euphratica</name>
    <name type="common">Euphrates poplar</name>
    <dbReference type="NCBI Taxonomy" id="75702"/>
    <lineage>
        <taxon>Eukaryota</taxon>
        <taxon>Viridiplantae</taxon>
        <taxon>Streptophyta</taxon>
        <taxon>Embryophyta</taxon>
        <taxon>Tracheophyta</taxon>
        <taxon>Spermatophyta</taxon>
        <taxon>Magnoliopsida</taxon>
        <taxon>eudicotyledons</taxon>
        <taxon>Gunneridae</taxon>
        <taxon>Pentapetalae</taxon>
        <taxon>rosids</taxon>
        <taxon>fabids</taxon>
        <taxon>Malpighiales</taxon>
        <taxon>Salicaceae</taxon>
        <taxon>Saliceae</taxon>
        <taxon>Populus</taxon>
    </lineage>
</organism>
<protein>
    <recommendedName>
        <fullName>Ribulose bisphosphate carboxylase/oxygenase activase, chloroplastic</fullName>
        <shortName>RA</shortName>
        <shortName>RuBisCO activase</shortName>
    </recommendedName>
</protein>
<name>RCA_POPEU</name>
<dbReference type="SMR" id="P84562"/>
<dbReference type="Proteomes" id="UP000694918">
    <property type="component" value="Unplaced"/>
</dbReference>
<dbReference type="GO" id="GO:0009570">
    <property type="term" value="C:chloroplast stroma"/>
    <property type="evidence" value="ECO:0007669"/>
    <property type="project" value="UniProtKB-SubCell"/>
</dbReference>
<dbReference type="GO" id="GO:0005524">
    <property type="term" value="F:ATP binding"/>
    <property type="evidence" value="ECO:0007669"/>
    <property type="project" value="UniProtKB-KW"/>
</dbReference>
<dbReference type="Gene3D" id="1.10.8.1070">
    <property type="match status" value="1"/>
</dbReference>
<keyword id="KW-0067">ATP-binding</keyword>
<keyword id="KW-0150">Chloroplast</keyword>
<keyword id="KW-0903">Direct protein sequencing</keyword>
<keyword id="KW-0547">Nucleotide-binding</keyword>
<keyword id="KW-0934">Plastid</keyword>
<keyword id="KW-1185">Reference proteome</keyword>